<sequence length="537" mass="60126">MSHMDAEDAQFQKEVAEVKQWWNDSRWRYTKRTFTAEEIVSKRGNLKITYPSNSQSKKLWNIVEHRFKNKDVSYTYGCLDPVMVTQMAKYLDTVYVSGWQASSTASSTDEPGPDLADYPYTTVPNKVGHLFMAQLFHDRKQREERLTTPKADRAKVANVDYLRPIIADADTGHGGLTAIMKLTKLFIEKGAAGIHIEDQAPGTKKCGHMAGKVLVPISEHINRLVAIRAQADIMGTDLLAVARTDSEAATLITSTIDPRDHYYIQGCTNPALQPLSELMYAAEQSGKSGSELQAIEDAWVKEANLKLFHEAVVDTINAGVHVNKQELINQFLEQSKGKSNAEARTIAQGLTGVDVYFNWDAARTREGYYRYKGGCQCAINRAIAYAPFCDMIWMESKLPDYAQAKEFADGVHAVWPEQKLAYNLSPSFNWKAAMPRDEQETYIQRLAQLGYCWQFITLAGLHQSALMADTFSKAYSKQGMRAYGEIIQEPEAENKVDVLTHQKWSGANYVDNMLKMVSGGVSSTAAMGKGVTEDQFK</sequence>
<protein>
    <recommendedName>
        <fullName evidence="5">Isocitrate lyase</fullName>
        <shortName evidence="6">ICL</shortName>
        <shortName evidence="6">Isocitrase</shortName>
        <shortName evidence="6">Isocitratase</shortName>
        <ecNumber evidence="1">4.1.3.1</ecNumber>
    </recommendedName>
    <alternativeName>
        <fullName evidence="1">Methylisocitrate lyase</fullName>
        <shortName evidence="6">MICA</shortName>
        <ecNumber evidence="1">4.1.3.30</ecNumber>
    </alternativeName>
    <alternativeName>
        <fullName evidence="6">Threo-D(S)-isocitrate glyoxylate-lyase</fullName>
    </alternativeName>
</protein>
<dbReference type="EC" id="4.1.3.1" evidence="1"/>
<dbReference type="EC" id="4.1.3.30" evidence="1"/>
<dbReference type="EMBL" id="AY118108">
    <property type="protein sequence ID" value="AAM89498.1"/>
    <property type="molecule type" value="Genomic_DNA"/>
</dbReference>
<dbReference type="SMR" id="Q86ZF1"/>
<dbReference type="UniPathway" id="UPA00703">
    <property type="reaction ID" value="UER00719"/>
</dbReference>
<dbReference type="PHI-base" id="PHI:261"/>
<dbReference type="GO" id="GO:0009514">
    <property type="term" value="C:glyoxysome"/>
    <property type="evidence" value="ECO:0007669"/>
    <property type="project" value="UniProtKB-SubCell"/>
</dbReference>
<dbReference type="GO" id="GO:0004451">
    <property type="term" value="F:isocitrate lyase activity"/>
    <property type="evidence" value="ECO:0007669"/>
    <property type="project" value="UniProtKB-EC"/>
</dbReference>
<dbReference type="GO" id="GO:0046872">
    <property type="term" value="F:metal ion binding"/>
    <property type="evidence" value="ECO:0007669"/>
    <property type="project" value="UniProtKB-KW"/>
</dbReference>
<dbReference type="GO" id="GO:0046421">
    <property type="term" value="F:methylisocitrate lyase activity"/>
    <property type="evidence" value="ECO:0007669"/>
    <property type="project" value="UniProtKB-EC"/>
</dbReference>
<dbReference type="GO" id="GO:0006097">
    <property type="term" value="P:glyoxylate cycle"/>
    <property type="evidence" value="ECO:0007669"/>
    <property type="project" value="UniProtKB-UniPathway"/>
</dbReference>
<dbReference type="GO" id="GO:0006099">
    <property type="term" value="P:tricarboxylic acid cycle"/>
    <property type="evidence" value="ECO:0007669"/>
    <property type="project" value="UniProtKB-KW"/>
</dbReference>
<dbReference type="FunFam" id="1.10.10.850:FF:000001">
    <property type="entry name" value="Isocitrate lyase"/>
    <property type="match status" value="1"/>
</dbReference>
<dbReference type="Gene3D" id="1.10.10.850">
    <property type="match status" value="1"/>
</dbReference>
<dbReference type="Gene3D" id="3.20.20.60">
    <property type="entry name" value="Phosphoenolpyruvate-binding domains"/>
    <property type="match status" value="1"/>
</dbReference>
<dbReference type="InterPro" id="IPR006254">
    <property type="entry name" value="Isocitrate_lyase"/>
</dbReference>
<dbReference type="InterPro" id="IPR018523">
    <property type="entry name" value="Isocitrate_lyase_ph_CS"/>
</dbReference>
<dbReference type="InterPro" id="IPR015813">
    <property type="entry name" value="Pyrv/PenolPyrv_kinase-like_dom"/>
</dbReference>
<dbReference type="InterPro" id="IPR040442">
    <property type="entry name" value="Pyrv_kinase-like_dom_sf"/>
</dbReference>
<dbReference type="NCBIfam" id="TIGR01346">
    <property type="entry name" value="isocit_lyase"/>
    <property type="match status" value="1"/>
</dbReference>
<dbReference type="PANTHER" id="PTHR21631:SF3">
    <property type="entry name" value="BIFUNCTIONAL GLYOXYLATE CYCLE PROTEIN"/>
    <property type="match status" value="1"/>
</dbReference>
<dbReference type="PANTHER" id="PTHR21631">
    <property type="entry name" value="ISOCITRATE LYASE/MALATE SYNTHASE"/>
    <property type="match status" value="1"/>
</dbReference>
<dbReference type="Pfam" id="PF00463">
    <property type="entry name" value="ICL"/>
    <property type="match status" value="1"/>
</dbReference>
<dbReference type="PIRSF" id="PIRSF001362">
    <property type="entry name" value="Isocit_lyase"/>
    <property type="match status" value="1"/>
</dbReference>
<dbReference type="SUPFAM" id="SSF51621">
    <property type="entry name" value="Phosphoenolpyruvate/pyruvate domain"/>
    <property type="match status" value="1"/>
</dbReference>
<dbReference type="PROSITE" id="PS00161">
    <property type="entry name" value="ISOCITRATE_LYASE"/>
    <property type="match status" value="1"/>
</dbReference>
<organism>
    <name type="scientific">Leptosphaeria maculans</name>
    <name type="common">Blackleg fungus</name>
    <name type="synonym">Phoma lingam</name>
    <dbReference type="NCBI Taxonomy" id="5022"/>
    <lineage>
        <taxon>Eukaryota</taxon>
        <taxon>Fungi</taxon>
        <taxon>Dikarya</taxon>
        <taxon>Ascomycota</taxon>
        <taxon>Pezizomycotina</taxon>
        <taxon>Dothideomycetes</taxon>
        <taxon>Pleosporomycetidae</taxon>
        <taxon>Pleosporales</taxon>
        <taxon>Pleosporineae</taxon>
        <taxon>Leptosphaeriaceae</taxon>
        <taxon>Plenodomus</taxon>
        <taxon>Plenodomus lingam/Leptosphaeria maculans species complex</taxon>
    </lineage>
</organism>
<keyword id="KW-0329">Glyoxylate bypass</keyword>
<keyword id="KW-0330">Glyoxysome</keyword>
<keyword id="KW-0456">Lyase</keyword>
<keyword id="KW-0460">Magnesium</keyword>
<keyword id="KW-0479">Metal-binding</keyword>
<keyword id="KW-0576">Peroxisome</keyword>
<keyword id="KW-0816">Tricarboxylic acid cycle</keyword>
<comment type="function">
    <text evidence="1 4">Catalyzes the formation of succinate and glyoxylate from isocitrate, a key step of the glyoxylate cycle, which operates as an anaplerotic route for replenishing the tricarboxylic acid cycle. Required for growth on ethanol or acetate, but dispensable when fermentable carbon sources are available. Also acts on 2-methylisocitrate (By similarity). Plays an important role in plant pathogenicity.</text>
</comment>
<comment type="catalytic activity">
    <reaction evidence="1">
        <text>D-threo-isocitrate = glyoxylate + succinate</text>
        <dbReference type="Rhea" id="RHEA:13245"/>
        <dbReference type="ChEBI" id="CHEBI:15562"/>
        <dbReference type="ChEBI" id="CHEBI:30031"/>
        <dbReference type="ChEBI" id="CHEBI:36655"/>
        <dbReference type="EC" id="4.1.3.1"/>
    </reaction>
</comment>
<comment type="catalytic activity">
    <reaction evidence="1">
        <text>(2S,3R)-3-hydroxybutane-1,2,3-tricarboxylate = pyruvate + succinate</text>
        <dbReference type="Rhea" id="RHEA:16809"/>
        <dbReference type="ChEBI" id="CHEBI:15361"/>
        <dbReference type="ChEBI" id="CHEBI:30031"/>
        <dbReference type="ChEBI" id="CHEBI:57429"/>
        <dbReference type="EC" id="4.1.3.30"/>
    </reaction>
</comment>
<comment type="cofactor">
    <cofactor evidence="3">
        <name>Mg(2+)</name>
        <dbReference type="ChEBI" id="CHEBI:18420"/>
    </cofactor>
</comment>
<comment type="pathway">
    <text>Carbohydrate metabolism; glyoxylate cycle; (S)-malate from isocitrate: step 1/2.</text>
</comment>
<comment type="subunit">
    <text evidence="1">Homotetramer.</text>
</comment>
<comment type="subcellular location">
    <subcellularLocation>
        <location evidence="2">Glyoxysome</location>
    </subcellularLocation>
</comment>
<comment type="induction">
    <text evidence="4">Expression is induced by starvation and acetate.</text>
</comment>
<comment type="disruption phenotype">
    <text evidence="4">Leads to limited hyphal growth in plants and extremely low germination rate of pycnidiospores.</text>
</comment>
<comment type="similarity">
    <text evidence="6">Belongs to the isocitrate lyase/PEP mutase superfamily. Isocitrate lyase family.</text>
</comment>
<reference key="1">
    <citation type="journal article" date="2002" name="Eukaryot. Cell">
        <title>Isocitrate lyase is essential for pathogenicity of the fungus Leptosphaeria maculans on canola (Brassica napus).</title>
        <authorList>
            <person name="Idnurm A."/>
            <person name="Howlett B.J."/>
        </authorList>
    </citation>
    <scope>NUCLEOTIDE SEQUENCE [GENOMIC DNA]</scope>
    <scope>INDUCTION</scope>
    <scope>DISRUPTION PHENOTYPE</scope>
    <scope>FUNCTION</scope>
</reference>
<evidence type="ECO:0000250" key="1">
    <source>
        <dbReference type="UniProtKB" id="P28240"/>
    </source>
</evidence>
<evidence type="ECO:0000250" key="2">
    <source>
        <dbReference type="UniProtKB" id="P28299"/>
    </source>
</evidence>
<evidence type="ECO:0000250" key="3">
    <source>
        <dbReference type="UniProtKB" id="P9WKK7"/>
    </source>
</evidence>
<evidence type="ECO:0000269" key="4">
    <source>
    </source>
</evidence>
<evidence type="ECO:0000303" key="5">
    <source>
    </source>
</evidence>
<evidence type="ECO:0000305" key="6"/>
<proteinExistence type="evidence at transcript level"/>
<gene>
    <name evidence="5" type="primary">ICL1</name>
</gene>
<feature type="chain" id="PRO_0000068792" description="Isocitrate lyase">
    <location>
        <begin position="1"/>
        <end position="537"/>
    </location>
</feature>
<feature type="active site" description="Proton acceptor" evidence="3">
    <location>
        <position position="206"/>
    </location>
</feature>
<feature type="binding site" evidence="3">
    <location>
        <begin position="97"/>
        <end position="99"/>
    </location>
    <ligand>
        <name>substrate</name>
    </ligand>
</feature>
<feature type="binding site" evidence="3">
    <location>
        <position position="168"/>
    </location>
    <ligand>
        <name>Mg(2+)</name>
        <dbReference type="ChEBI" id="CHEBI:18420"/>
    </ligand>
</feature>
<feature type="binding site" evidence="3">
    <location>
        <begin position="207"/>
        <end position="208"/>
    </location>
    <ligand>
        <name>substrate</name>
    </ligand>
</feature>
<feature type="binding site" evidence="3">
    <location>
        <position position="243"/>
    </location>
    <ligand>
        <name>substrate</name>
    </ligand>
</feature>
<feature type="binding site" evidence="3">
    <location>
        <begin position="423"/>
        <end position="427"/>
    </location>
    <ligand>
        <name>substrate</name>
    </ligand>
</feature>
<feature type="binding site" evidence="3">
    <location>
        <position position="457"/>
    </location>
    <ligand>
        <name>substrate</name>
    </ligand>
</feature>
<accession>Q86ZF1</accession>
<name>ACEA_LEPMC</name>